<sequence length="291" mass="32944">MAGEKAPAAKPDATKKSPAKKADHARGKAKKKTLAEKKPKKGKPHCSRNPVLVRGIGRYSRSAMYSRKALYKRKYAAPKSRIERKKKREKVLATVTKPVGGDKNGGTRVVKLRKMPRYYPTEDVPRKLLSHGKKPFSQHVRKLRASITPGTILIILTGRHRGKRVVFLKQLSSGLLLVTGPLSLNRVPLRRTHQKFVIATSTKIDISGVKIPKHLTDAYFKKKKLRKPRHQEGEIFDTEKEKYEITEQRKVDQKAVDSQILPKIKAVPQLQGYLRSVFALTNGVYPHKLVF</sequence>
<accession>G1SKF7</accession>
<organism>
    <name type="scientific">Oryctolagus cuniculus</name>
    <name type="common">Rabbit</name>
    <dbReference type="NCBI Taxonomy" id="9986"/>
    <lineage>
        <taxon>Eukaryota</taxon>
        <taxon>Metazoa</taxon>
        <taxon>Chordata</taxon>
        <taxon>Craniata</taxon>
        <taxon>Vertebrata</taxon>
        <taxon>Euteleostomi</taxon>
        <taxon>Mammalia</taxon>
        <taxon>Eutheria</taxon>
        <taxon>Euarchontoglires</taxon>
        <taxon>Glires</taxon>
        <taxon>Lagomorpha</taxon>
        <taxon>Leporidae</taxon>
        <taxon>Oryctolagus</taxon>
    </lineage>
</organism>
<name>RL6_RABIT</name>
<protein>
    <recommendedName>
        <fullName>Large ribosomal subunit protein eL6</fullName>
    </recommendedName>
    <alternativeName>
        <fullName>60S ribosomal protein L6</fullName>
    </alternativeName>
</protein>
<gene>
    <name type="primary">RPL6</name>
</gene>
<proteinExistence type="evidence at protein level"/>
<evidence type="ECO:0000250" key="1">
    <source>
        <dbReference type="UniProtKB" id="P47911"/>
    </source>
</evidence>
<evidence type="ECO:0000250" key="2">
    <source>
        <dbReference type="UniProtKB" id="Q02878"/>
    </source>
</evidence>
<evidence type="ECO:0000250" key="3">
    <source>
        <dbReference type="UniProtKB" id="Q2YGT9"/>
    </source>
</evidence>
<evidence type="ECO:0000256" key="4">
    <source>
        <dbReference type="SAM" id="MobiDB-lite"/>
    </source>
</evidence>
<evidence type="ECO:0000269" key="5">
    <source>
    </source>
</evidence>
<evidence type="ECO:0000269" key="6">
    <source>
    </source>
</evidence>
<evidence type="ECO:0000269" key="7">
    <source>
    </source>
</evidence>
<evidence type="ECO:0000269" key="8">
    <source>
    </source>
</evidence>
<evidence type="ECO:0000269" key="9">
    <source>
    </source>
</evidence>
<evidence type="ECO:0000269" key="10">
    <source>
    </source>
</evidence>
<evidence type="ECO:0000269" key="11">
    <source>
    </source>
</evidence>
<evidence type="ECO:0000269" key="12">
    <source>
    </source>
</evidence>
<evidence type="ECO:0000269" key="13">
    <source>
    </source>
</evidence>
<evidence type="ECO:0000269" key="14">
    <source>
    </source>
</evidence>
<evidence type="ECO:0000269" key="15">
    <source>
    </source>
</evidence>
<evidence type="ECO:0000269" key="16">
    <source>
    </source>
</evidence>
<evidence type="ECO:0000305" key="17"/>
<evidence type="ECO:0007744" key="18">
    <source>
        <dbReference type="PDB" id="3JAG"/>
    </source>
</evidence>
<evidence type="ECO:0007744" key="19">
    <source>
        <dbReference type="PDB" id="3JAH"/>
    </source>
</evidence>
<evidence type="ECO:0007744" key="20">
    <source>
        <dbReference type="PDB" id="5LZS"/>
    </source>
</evidence>
<evidence type="ECO:0007744" key="21">
    <source>
        <dbReference type="PDB" id="5LZT"/>
    </source>
</evidence>
<evidence type="ECO:0007744" key="22">
    <source>
        <dbReference type="PDB" id="6D90"/>
    </source>
</evidence>
<evidence type="ECO:0007744" key="23">
    <source>
        <dbReference type="PDB" id="6D9J"/>
    </source>
</evidence>
<evidence type="ECO:0007744" key="24">
    <source>
        <dbReference type="PDB" id="6HCM"/>
    </source>
</evidence>
<evidence type="ECO:0007744" key="25">
    <source>
        <dbReference type="PDB" id="6MTB"/>
    </source>
</evidence>
<evidence type="ECO:0007744" key="26">
    <source>
        <dbReference type="PDB" id="6MTC"/>
    </source>
</evidence>
<evidence type="ECO:0007744" key="27">
    <source>
        <dbReference type="PDB" id="6P5I"/>
    </source>
</evidence>
<evidence type="ECO:0007744" key="28">
    <source>
        <dbReference type="PDB" id="6P5J"/>
    </source>
</evidence>
<evidence type="ECO:0007744" key="29">
    <source>
        <dbReference type="PDB" id="6R5Q"/>
    </source>
</evidence>
<evidence type="ECO:0007744" key="30">
    <source>
        <dbReference type="PDB" id="6R6G"/>
    </source>
</evidence>
<evidence type="ECO:0007744" key="31">
    <source>
        <dbReference type="PDB" id="6SGC"/>
    </source>
</evidence>
<evidence type="ECO:0007744" key="32">
    <source>
        <dbReference type="PDB" id="6ZVK"/>
    </source>
</evidence>
<evidence type="ECO:0007744" key="33">
    <source>
        <dbReference type="PDB" id="7A01"/>
    </source>
</evidence>
<evidence type="ECO:0007744" key="34">
    <source>
        <dbReference type="PDB" id="7OYD"/>
    </source>
</evidence>
<evidence type="ECO:0007744" key="35">
    <source>
        <dbReference type="PDB" id="7UCJ"/>
    </source>
</evidence>
<evidence type="ECO:0007744" key="36">
    <source>
        <dbReference type="PDB" id="7UCK"/>
    </source>
</evidence>
<evidence type="ECO:0007744" key="37">
    <source>
        <dbReference type="PDB" id="7ZJW"/>
    </source>
</evidence>
<evidence type="ECO:0007744" key="38">
    <source>
        <dbReference type="PDB" id="7ZJX"/>
    </source>
</evidence>
<dbReference type="EMBL" id="AAGW02061512">
    <property type="status" value="NOT_ANNOTATED_CDS"/>
    <property type="molecule type" value="Genomic_DNA"/>
</dbReference>
<dbReference type="RefSeq" id="XP_017205046.1">
    <property type="nucleotide sequence ID" value="XM_017349557.3"/>
</dbReference>
<dbReference type="PDB" id="3JAG">
    <property type="method" value="EM"/>
    <property type="resolution" value="3.65 A"/>
    <property type="chains" value="E=44-276"/>
</dbReference>
<dbReference type="PDB" id="3JAH">
    <property type="method" value="EM"/>
    <property type="resolution" value="3.45 A"/>
    <property type="chains" value="E=44-276"/>
</dbReference>
<dbReference type="PDB" id="5LZS">
    <property type="method" value="EM"/>
    <property type="resolution" value="3.31 A"/>
    <property type="chains" value="E=1-291"/>
</dbReference>
<dbReference type="PDB" id="5LZT">
    <property type="method" value="EM"/>
    <property type="resolution" value="3.65 A"/>
    <property type="chains" value="E=1-291"/>
</dbReference>
<dbReference type="PDB" id="5LZU">
    <property type="method" value="EM"/>
    <property type="resolution" value="3.75 A"/>
    <property type="chains" value="E=1-291"/>
</dbReference>
<dbReference type="PDB" id="5LZV">
    <property type="method" value="EM"/>
    <property type="resolution" value="3.35 A"/>
    <property type="chains" value="E=1-291"/>
</dbReference>
<dbReference type="PDB" id="5LZW">
    <property type="method" value="EM"/>
    <property type="resolution" value="3.53 A"/>
    <property type="chains" value="E=1-291"/>
</dbReference>
<dbReference type="PDB" id="5LZX">
    <property type="method" value="EM"/>
    <property type="resolution" value="3.67 A"/>
    <property type="chains" value="E=1-291"/>
</dbReference>
<dbReference type="PDB" id="5LZY">
    <property type="method" value="EM"/>
    <property type="resolution" value="3.99 A"/>
    <property type="chains" value="E=1-291"/>
</dbReference>
<dbReference type="PDB" id="5LZZ">
    <property type="method" value="EM"/>
    <property type="resolution" value="3.47 A"/>
    <property type="chains" value="E=1-291"/>
</dbReference>
<dbReference type="PDB" id="6D90">
    <property type="method" value="EM"/>
    <property type="resolution" value="3.20 A"/>
    <property type="chains" value="E=1-291"/>
</dbReference>
<dbReference type="PDB" id="6D9J">
    <property type="method" value="EM"/>
    <property type="resolution" value="3.20 A"/>
    <property type="chains" value="E=1-291"/>
</dbReference>
<dbReference type="PDB" id="6HCF">
    <property type="method" value="EM"/>
    <property type="resolution" value="3.90 A"/>
    <property type="chains" value="E3=1-291"/>
</dbReference>
<dbReference type="PDB" id="6HCJ">
    <property type="method" value="EM"/>
    <property type="resolution" value="3.80 A"/>
    <property type="chains" value="E3=1-291"/>
</dbReference>
<dbReference type="PDB" id="6HCM">
    <property type="method" value="EM"/>
    <property type="resolution" value="6.80 A"/>
    <property type="chains" value="E3=1-291"/>
</dbReference>
<dbReference type="PDB" id="6HCQ">
    <property type="method" value="EM"/>
    <property type="resolution" value="6.50 A"/>
    <property type="chains" value="E3=1-291"/>
</dbReference>
<dbReference type="PDB" id="6MTB">
    <property type="method" value="EM"/>
    <property type="resolution" value="3.60 A"/>
    <property type="chains" value="E=1-291"/>
</dbReference>
<dbReference type="PDB" id="6MTC">
    <property type="method" value="EM"/>
    <property type="resolution" value="3.40 A"/>
    <property type="chains" value="E=1-291"/>
</dbReference>
<dbReference type="PDB" id="6MTD">
    <property type="method" value="EM"/>
    <property type="resolution" value="3.30 A"/>
    <property type="chains" value="E=1-291"/>
</dbReference>
<dbReference type="PDB" id="6MTE">
    <property type="method" value="EM"/>
    <property type="resolution" value="3.40 A"/>
    <property type="chains" value="E=1-291"/>
</dbReference>
<dbReference type="PDB" id="6P5I">
    <property type="method" value="EM"/>
    <property type="resolution" value="3.10 A"/>
    <property type="chains" value="AE=1-291"/>
</dbReference>
<dbReference type="PDB" id="6P5J">
    <property type="method" value="EM"/>
    <property type="resolution" value="3.10 A"/>
    <property type="chains" value="AE=1-291"/>
</dbReference>
<dbReference type="PDB" id="6P5K">
    <property type="method" value="EM"/>
    <property type="resolution" value="3.10 A"/>
    <property type="chains" value="AE=1-291"/>
</dbReference>
<dbReference type="PDB" id="6P5N">
    <property type="method" value="EM"/>
    <property type="resolution" value="3.20 A"/>
    <property type="chains" value="AE=1-291"/>
</dbReference>
<dbReference type="PDB" id="6R5Q">
    <property type="method" value="EM"/>
    <property type="resolution" value="3.00 A"/>
    <property type="chains" value="E=41-291"/>
</dbReference>
<dbReference type="PDB" id="6R6G">
    <property type="method" value="EM"/>
    <property type="resolution" value="3.70 A"/>
    <property type="chains" value="E=41-291"/>
</dbReference>
<dbReference type="PDB" id="6R7Q">
    <property type="method" value="EM"/>
    <property type="resolution" value="3.90 A"/>
    <property type="chains" value="E=41-291"/>
</dbReference>
<dbReference type="PDB" id="6SGC">
    <property type="method" value="EM"/>
    <property type="resolution" value="2.80 A"/>
    <property type="chains" value="E2=1-291"/>
</dbReference>
<dbReference type="PDB" id="6T59">
    <property type="method" value="EM"/>
    <property type="resolution" value="3.11 A"/>
    <property type="chains" value="E3=1-291"/>
</dbReference>
<dbReference type="PDB" id="6ZVK">
    <property type="method" value="EM"/>
    <property type="resolution" value="3.49 A"/>
    <property type="chains" value="T2=91-291"/>
</dbReference>
<dbReference type="PDB" id="7A01">
    <property type="method" value="EM"/>
    <property type="resolution" value="3.60 A"/>
    <property type="chains" value="T2=91-291"/>
</dbReference>
<dbReference type="PDB" id="7MDZ">
    <property type="method" value="EM"/>
    <property type="resolution" value="3.20 A"/>
    <property type="chains" value="E=1-291"/>
</dbReference>
<dbReference type="PDB" id="7NFX">
    <property type="method" value="EM"/>
    <property type="resolution" value="3.20 A"/>
    <property type="chains" value="E=1-291"/>
</dbReference>
<dbReference type="PDB" id="7NWG">
    <property type="method" value="EM"/>
    <property type="resolution" value="3.80 A"/>
    <property type="chains" value="E3=1-291"/>
</dbReference>
<dbReference type="PDB" id="7NWH">
    <property type="method" value="EM"/>
    <property type="resolution" value="4.10 A"/>
    <property type="chains" value="E=1-291"/>
</dbReference>
<dbReference type="PDB" id="7NWI">
    <property type="method" value="EM"/>
    <property type="resolution" value="3.13 A"/>
    <property type="chains" value="E=1-291"/>
</dbReference>
<dbReference type="PDB" id="7O7Y">
    <property type="method" value="EM"/>
    <property type="resolution" value="2.20 A"/>
    <property type="chains" value="BE=1-291"/>
</dbReference>
<dbReference type="PDB" id="7O7Z">
    <property type="method" value="EM"/>
    <property type="resolution" value="2.40 A"/>
    <property type="chains" value="BE=1-291"/>
</dbReference>
<dbReference type="PDB" id="7O80">
    <property type="method" value="EM"/>
    <property type="resolution" value="2.90 A"/>
    <property type="chains" value="BE=1-291"/>
</dbReference>
<dbReference type="PDB" id="7O81">
    <property type="method" value="EM"/>
    <property type="resolution" value="3.10 A"/>
    <property type="chains" value="BE=1-291"/>
</dbReference>
<dbReference type="PDB" id="7OBR">
    <property type="method" value="EM"/>
    <property type="resolution" value="2.80 A"/>
    <property type="chains" value="E=44-291"/>
</dbReference>
<dbReference type="PDB" id="7OYD">
    <property type="method" value="EM"/>
    <property type="resolution" value="2.30 A"/>
    <property type="chains" value="E=1-291"/>
</dbReference>
<dbReference type="PDB" id="7QWQ">
    <property type="method" value="EM"/>
    <property type="resolution" value="2.83 A"/>
    <property type="chains" value="E=1-291"/>
</dbReference>
<dbReference type="PDB" id="7QWR">
    <property type="method" value="EM"/>
    <property type="resolution" value="2.90 A"/>
    <property type="chains" value="E=1-291"/>
</dbReference>
<dbReference type="PDB" id="7QWS">
    <property type="method" value="EM"/>
    <property type="resolution" value="3.40 A"/>
    <property type="chains" value="E=1-291"/>
</dbReference>
<dbReference type="PDB" id="7TM3">
    <property type="method" value="EM"/>
    <property type="resolution" value="3.25 A"/>
    <property type="chains" value="E=1-291"/>
</dbReference>
<dbReference type="PDB" id="7TOQ">
    <property type="method" value="EM"/>
    <property type="resolution" value="3.10 A"/>
    <property type="chains" value="AL06=41-291"/>
</dbReference>
<dbReference type="PDB" id="7TOR">
    <property type="method" value="EM"/>
    <property type="resolution" value="2.90 A"/>
    <property type="chains" value="AL06=41-291"/>
</dbReference>
<dbReference type="PDB" id="7TUT">
    <property type="method" value="EM"/>
    <property type="resolution" value="3.88 A"/>
    <property type="chains" value="E=1-291"/>
</dbReference>
<dbReference type="PDB" id="7UCJ">
    <property type="method" value="EM"/>
    <property type="resolution" value="3.10 A"/>
    <property type="chains" value="E=42-291"/>
</dbReference>
<dbReference type="PDB" id="7UCK">
    <property type="method" value="EM"/>
    <property type="resolution" value="2.80 A"/>
    <property type="chains" value="E=41-291"/>
</dbReference>
<dbReference type="PDB" id="7ZJW">
    <property type="method" value="EM"/>
    <property type="resolution" value="2.80 A"/>
    <property type="chains" value="LH=1-291"/>
</dbReference>
<dbReference type="PDB" id="7ZJX">
    <property type="method" value="EM"/>
    <property type="resolution" value="3.10 A"/>
    <property type="chains" value="LH=1-291"/>
</dbReference>
<dbReference type="PDB" id="8B5L">
    <property type="method" value="EM"/>
    <property type="resolution" value="2.86 A"/>
    <property type="chains" value="E=1-291"/>
</dbReference>
<dbReference type="PDB" id="8B6C">
    <property type="method" value="EM"/>
    <property type="resolution" value="2.79 A"/>
    <property type="chains" value="E=1-291"/>
</dbReference>
<dbReference type="PDB" id="8BHF">
    <property type="method" value="EM"/>
    <property type="resolution" value="3.10 A"/>
    <property type="chains" value="n3=41-291"/>
</dbReference>
<dbReference type="PDB" id="8BPO">
    <property type="method" value="EM"/>
    <property type="resolution" value="2.80 A"/>
    <property type="chains" value="E2=1-291"/>
</dbReference>
<dbReference type="PDB" id="8BTK">
    <property type="method" value="EM"/>
    <property type="resolution" value="3.50 A"/>
    <property type="chains" value="BE=1-291"/>
</dbReference>
<dbReference type="PDB" id="8P2K">
    <property type="method" value="EM"/>
    <property type="resolution" value="2.90 A"/>
    <property type="chains" value="BE=1-291"/>
</dbReference>
<dbReference type="PDB" id="8RJB">
    <property type="method" value="EM"/>
    <property type="resolution" value="2.69 A"/>
    <property type="chains" value="E=1-291"/>
</dbReference>
<dbReference type="PDB" id="8RJC">
    <property type="method" value="EM"/>
    <property type="resolution" value="2.90 A"/>
    <property type="chains" value="E=1-291"/>
</dbReference>
<dbReference type="PDB" id="8RJD">
    <property type="method" value="EM"/>
    <property type="resolution" value="2.79 A"/>
    <property type="chains" value="E=1-291"/>
</dbReference>
<dbReference type="PDB" id="8SCB">
    <property type="method" value="EM"/>
    <property type="resolution" value="2.50 A"/>
    <property type="chains" value="E=1-291"/>
</dbReference>
<dbReference type="PDB" id="8VFT">
    <property type="method" value="EM"/>
    <property type="resolution" value="3.30 A"/>
    <property type="chains" value="E=1-291"/>
</dbReference>
<dbReference type="PDB" id="9BDL">
    <property type="method" value="EM"/>
    <property type="resolution" value="2.80 A"/>
    <property type="chains" value="AL06=41-291"/>
</dbReference>
<dbReference type="PDB" id="9BDN">
    <property type="method" value="EM"/>
    <property type="resolution" value="3.10 A"/>
    <property type="chains" value="AL06=41-291"/>
</dbReference>
<dbReference type="PDB" id="9BDP">
    <property type="method" value="EM"/>
    <property type="resolution" value="3.70 A"/>
    <property type="chains" value="AL06=41-291"/>
</dbReference>
<dbReference type="PDB" id="9F1B">
    <property type="method" value="EM"/>
    <property type="resolution" value="3.01 A"/>
    <property type="chains" value="BE=1-291"/>
</dbReference>
<dbReference type="PDB" id="9F1C">
    <property type="method" value="EM"/>
    <property type="resolution" value="3.78 A"/>
    <property type="chains" value="BE=1-291"/>
</dbReference>
<dbReference type="PDB" id="9F1D">
    <property type="method" value="EM"/>
    <property type="resolution" value="3.26 A"/>
    <property type="chains" value="BE=1-291"/>
</dbReference>
<dbReference type="PDBsum" id="3JAG"/>
<dbReference type="PDBsum" id="3JAH"/>
<dbReference type="PDBsum" id="5LZS"/>
<dbReference type="PDBsum" id="5LZT"/>
<dbReference type="PDBsum" id="5LZU"/>
<dbReference type="PDBsum" id="5LZV"/>
<dbReference type="PDBsum" id="5LZW"/>
<dbReference type="PDBsum" id="5LZX"/>
<dbReference type="PDBsum" id="5LZY"/>
<dbReference type="PDBsum" id="5LZZ"/>
<dbReference type="PDBsum" id="6D90"/>
<dbReference type="PDBsum" id="6D9J"/>
<dbReference type="PDBsum" id="6HCF"/>
<dbReference type="PDBsum" id="6HCJ"/>
<dbReference type="PDBsum" id="6HCM"/>
<dbReference type="PDBsum" id="6HCQ"/>
<dbReference type="PDBsum" id="6MTB"/>
<dbReference type="PDBsum" id="6MTC"/>
<dbReference type="PDBsum" id="6MTD"/>
<dbReference type="PDBsum" id="6MTE"/>
<dbReference type="PDBsum" id="6P5I"/>
<dbReference type="PDBsum" id="6P5J"/>
<dbReference type="PDBsum" id="6P5K"/>
<dbReference type="PDBsum" id="6P5N"/>
<dbReference type="PDBsum" id="6R5Q"/>
<dbReference type="PDBsum" id="6R6G"/>
<dbReference type="PDBsum" id="6R7Q"/>
<dbReference type="PDBsum" id="6SGC"/>
<dbReference type="PDBsum" id="6T59"/>
<dbReference type="PDBsum" id="6ZVK"/>
<dbReference type="PDBsum" id="7A01"/>
<dbReference type="PDBsum" id="7MDZ"/>
<dbReference type="PDBsum" id="7NFX"/>
<dbReference type="PDBsum" id="7NWG"/>
<dbReference type="PDBsum" id="7NWH"/>
<dbReference type="PDBsum" id="7NWI"/>
<dbReference type="PDBsum" id="7O7Y"/>
<dbReference type="PDBsum" id="7O7Z"/>
<dbReference type="PDBsum" id="7O80"/>
<dbReference type="PDBsum" id="7O81"/>
<dbReference type="PDBsum" id="7OBR"/>
<dbReference type="PDBsum" id="7OYD"/>
<dbReference type="PDBsum" id="7QWQ"/>
<dbReference type="PDBsum" id="7QWR"/>
<dbReference type="PDBsum" id="7QWS"/>
<dbReference type="PDBsum" id="7TM3"/>
<dbReference type="PDBsum" id="7TOQ"/>
<dbReference type="PDBsum" id="7TOR"/>
<dbReference type="PDBsum" id="7TUT"/>
<dbReference type="PDBsum" id="7UCJ"/>
<dbReference type="PDBsum" id="7UCK"/>
<dbReference type="PDBsum" id="7ZJW"/>
<dbReference type="PDBsum" id="7ZJX"/>
<dbReference type="PDBsum" id="8B5L"/>
<dbReference type="PDBsum" id="8B6C"/>
<dbReference type="PDBsum" id="8BHF"/>
<dbReference type="PDBsum" id="8BPO"/>
<dbReference type="PDBsum" id="8BTK"/>
<dbReference type="PDBsum" id="8P2K"/>
<dbReference type="PDBsum" id="8RJB"/>
<dbReference type="PDBsum" id="8RJC"/>
<dbReference type="PDBsum" id="8RJD"/>
<dbReference type="PDBsum" id="8SCB"/>
<dbReference type="PDBsum" id="8VFT"/>
<dbReference type="PDBsum" id="9BDL"/>
<dbReference type="PDBsum" id="9BDN"/>
<dbReference type="PDBsum" id="9BDP"/>
<dbReference type="PDBsum" id="9F1B"/>
<dbReference type="PDBsum" id="9F1C"/>
<dbReference type="PDBsum" id="9F1D"/>
<dbReference type="EMDB" id="EMD-0099"/>
<dbReference type="EMDB" id="EMD-0100"/>
<dbReference type="EMDB" id="EMD-0192"/>
<dbReference type="EMDB" id="EMD-0194"/>
<dbReference type="EMDB" id="EMD-0195"/>
<dbReference type="EMDB" id="EMD-0197"/>
<dbReference type="EMDB" id="EMD-10181"/>
<dbReference type="EMDB" id="EMD-10380"/>
<dbReference type="EMDB" id="EMD-11459"/>
<dbReference type="EMDB" id="EMD-11590"/>
<dbReference type="EMDB" id="EMD-12303"/>
<dbReference type="EMDB" id="EMD-12631"/>
<dbReference type="EMDB" id="EMD-12632"/>
<dbReference type="EMDB" id="EMD-12633"/>
<dbReference type="EMDB" id="EMD-12756"/>
<dbReference type="EMDB" id="EMD-12757"/>
<dbReference type="EMDB" id="EMD-12758"/>
<dbReference type="EMDB" id="EMD-12759"/>
<dbReference type="EMDB" id="EMD-12801"/>
<dbReference type="EMDB" id="EMD-13114"/>
<dbReference type="EMDB" id="EMD-14191"/>
<dbReference type="EMDB" id="EMD-14192"/>
<dbReference type="EMDB" id="EMD-14193"/>
<dbReference type="EMDB" id="EMD-14751"/>
<dbReference type="EMDB" id="EMD-14752"/>
<dbReference type="EMDB" id="EMD-15860"/>
<dbReference type="EMDB" id="EMD-15863"/>
<dbReference type="EMDB" id="EMD-16052"/>
<dbReference type="EMDB" id="EMD-16155"/>
<dbReference type="EMDB" id="EMD-16232"/>
<dbReference type="EMDB" id="EMD-17367"/>
<dbReference type="EMDB" id="EMD-19195"/>
<dbReference type="EMDB" id="EMD-19197"/>
<dbReference type="EMDB" id="EMD-19198"/>
<dbReference type="EMDB" id="EMD-20255"/>
<dbReference type="EMDB" id="EMD-20256"/>
<dbReference type="EMDB" id="EMD-20257"/>
<dbReference type="EMDB" id="EMD-20258"/>
<dbReference type="EMDB" id="EMD-23785"/>
<dbReference type="EMDB" id="EMD-25994"/>
<dbReference type="EMDB" id="EMD-26035"/>
<dbReference type="EMDB" id="EMD-26036"/>
<dbReference type="EMDB" id="EMD-26133"/>
<dbReference type="EMDB" id="EMD-26444"/>
<dbReference type="EMDB" id="EMD-26445"/>
<dbReference type="EMDB" id="EMD-40344"/>
<dbReference type="EMDB" id="EMD-4130"/>
<dbReference type="EMDB" id="EMD-4131"/>
<dbReference type="EMDB" id="EMD-4132"/>
<dbReference type="EMDB" id="EMD-4133"/>
<dbReference type="EMDB" id="EMD-4134"/>
<dbReference type="EMDB" id="EMD-4135"/>
<dbReference type="EMDB" id="EMD-4136"/>
<dbReference type="EMDB" id="EMD-4137"/>
<dbReference type="EMDB" id="EMD-4300"/>
<dbReference type="EMDB" id="EMD-43189"/>
<dbReference type="EMDB" id="EMD-44461"/>
<dbReference type="EMDB" id="EMD-44463"/>
<dbReference type="EMDB" id="EMD-44464"/>
<dbReference type="EMDB" id="EMD-4729"/>
<dbReference type="EMDB" id="EMD-4735"/>
<dbReference type="EMDB" id="EMD-4745"/>
<dbReference type="EMDB" id="EMD-50124"/>
<dbReference type="EMDB" id="EMD-50125"/>
<dbReference type="EMDB" id="EMD-50126"/>
<dbReference type="EMDB" id="EMD-7834"/>
<dbReference type="EMDB" id="EMD-7836"/>
<dbReference type="EMDB" id="EMD-9237"/>
<dbReference type="EMDB" id="EMD-9239"/>
<dbReference type="EMDB" id="EMD-9240"/>
<dbReference type="EMDB" id="EMD-9242"/>
<dbReference type="SMR" id="G1SKF7"/>
<dbReference type="FunCoup" id="G1SKF7">
    <property type="interactions" value="1827"/>
</dbReference>
<dbReference type="IntAct" id="G1SKF7">
    <property type="interactions" value="1"/>
</dbReference>
<dbReference type="STRING" id="9986.ENSOCUP00000003297"/>
<dbReference type="PaxDb" id="9986-ENSOCUP00000003297"/>
<dbReference type="Ensembl" id="ENSOCUT00000003803.3">
    <property type="protein sequence ID" value="ENSOCUP00000003297.2"/>
    <property type="gene ID" value="ENSOCUG00000003802.3"/>
</dbReference>
<dbReference type="GeneID" id="100355326"/>
<dbReference type="KEGG" id="ocu:100355326"/>
<dbReference type="CTD" id="6128"/>
<dbReference type="eggNOG" id="KOG1694">
    <property type="taxonomic scope" value="Eukaryota"/>
</dbReference>
<dbReference type="GeneTree" id="ENSGT00390000003682"/>
<dbReference type="HOGENOM" id="CLU_066767_0_1_1"/>
<dbReference type="InParanoid" id="G1SKF7"/>
<dbReference type="OMA" id="FPCHEKK"/>
<dbReference type="OrthoDB" id="9630499at2759"/>
<dbReference type="TreeFam" id="TF300115"/>
<dbReference type="Proteomes" id="UP000001811">
    <property type="component" value="Chromosome 21"/>
</dbReference>
<dbReference type="Bgee" id="ENSOCUG00000003802">
    <property type="expression patterns" value="Expressed in upper lobe of left lung and 15 other cell types or tissues"/>
</dbReference>
<dbReference type="GO" id="GO:0022625">
    <property type="term" value="C:cytosolic large ribosomal subunit"/>
    <property type="evidence" value="ECO:0007669"/>
    <property type="project" value="TreeGrafter"/>
</dbReference>
<dbReference type="GO" id="GO:0005791">
    <property type="term" value="C:rough endoplasmic reticulum"/>
    <property type="evidence" value="ECO:0007669"/>
    <property type="project" value="UniProtKB-SubCell"/>
</dbReference>
<dbReference type="GO" id="GO:0003723">
    <property type="term" value="F:RNA binding"/>
    <property type="evidence" value="ECO:0007669"/>
    <property type="project" value="TreeGrafter"/>
</dbReference>
<dbReference type="GO" id="GO:0003735">
    <property type="term" value="F:structural constituent of ribosome"/>
    <property type="evidence" value="ECO:0007669"/>
    <property type="project" value="InterPro"/>
</dbReference>
<dbReference type="GO" id="GO:0002181">
    <property type="term" value="P:cytoplasmic translation"/>
    <property type="evidence" value="ECO:0007669"/>
    <property type="project" value="TreeGrafter"/>
</dbReference>
<dbReference type="GO" id="GO:0000027">
    <property type="term" value="P:ribosomal large subunit assembly"/>
    <property type="evidence" value="ECO:0007669"/>
    <property type="project" value="TreeGrafter"/>
</dbReference>
<dbReference type="CDD" id="cd13156">
    <property type="entry name" value="KOW_RPL6"/>
    <property type="match status" value="1"/>
</dbReference>
<dbReference type="FunFam" id="2.30.30.30:FF:000020">
    <property type="entry name" value="60S ribosomal protein L6"/>
    <property type="match status" value="1"/>
</dbReference>
<dbReference type="Gene3D" id="2.30.30.30">
    <property type="match status" value="1"/>
</dbReference>
<dbReference type="InterPro" id="IPR000915">
    <property type="entry name" value="60S_ribosomal_eL6"/>
</dbReference>
<dbReference type="InterPro" id="IPR014722">
    <property type="entry name" value="Rib_uL2_dom2"/>
</dbReference>
<dbReference type="InterPro" id="IPR049633">
    <property type="entry name" value="Ribosomal_eL6_CS"/>
</dbReference>
<dbReference type="InterPro" id="IPR041997">
    <property type="entry name" value="Ribosomal_eL6_KOW"/>
</dbReference>
<dbReference type="InterPro" id="IPR005568">
    <property type="entry name" value="Ribosomal_uL6_N"/>
</dbReference>
<dbReference type="InterPro" id="IPR008991">
    <property type="entry name" value="Translation_prot_SH3-like_sf"/>
</dbReference>
<dbReference type="PANTHER" id="PTHR10715">
    <property type="entry name" value="60S RIBOSOMAL PROTEIN L6"/>
    <property type="match status" value="1"/>
</dbReference>
<dbReference type="PANTHER" id="PTHR10715:SF0">
    <property type="entry name" value="LARGE RIBOSOMAL SUBUNIT PROTEIN EL6"/>
    <property type="match status" value="1"/>
</dbReference>
<dbReference type="Pfam" id="PF01159">
    <property type="entry name" value="Ribosomal_L6e"/>
    <property type="match status" value="1"/>
</dbReference>
<dbReference type="Pfam" id="PF03868">
    <property type="entry name" value="Ribosomal_L6e_N"/>
    <property type="match status" value="1"/>
</dbReference>
<dbReference type="SUPFAM" id="SSF50104">
    <property type="entry name" value="Translation proteins SH3-like domain"/>
    <property type="match status" value="1"/>
</dbReference>
<dbReference type="PROSITE" id="PS01170">
    <property type="entry name" value="RIBOSOMAL_L6E"/>
    <property type="match status" value="1"/>
</dbReference>
<reference key="1">
    <citation type="journal article" date="2011" name="Nature">
        <title>A high-resolution map of human evolutionary constraint using 29 mammals.</title>
        <authorList>
            <person name="Lindblad-Toh K."/>
            <person name="Garber M."/>
            <person name="Zuk O."/>
            <person name="Lin M.F."/>
            <person name="Parker B.J."/>
            <person name="Washietl S."/>
            <person name="Kheradpour P."/>
            <person name="Ernst J."/>
            <person name="Jordan G."/>
            <person name="Mauceli E."/>
            <person name="Ward L.D."/>
            <person name="Lowe C.B."/>
            <person name="Holloway A.K."/>
            <person name="Clamp M."/>
            <person name="Gnerre S."/>
            <person name="Alfoldi J."/>
            <person name="Beal K."/>
            <person name="Chang J."/>
            <person name="Clawson H."/>
            <person name="Cuff J."/>
            <person name="Di Palma F."/>
            <person name="Fitzgerald S."/>
            <person name="Flicek P."/>
            <person name="Guttman M."/>
            <person name="Hubisz M.J."/>
            <person name="Jaffe D.B."/>
            <person name="Jungreis I."/>
            <person name="Kent W.J."/>
            <person name="Kostka D."/>
            <person name="Lara M."/>
            <person name="Martins A.L."/>
            <person name="Massingham T."/>
            <person name="Moltke I."/>
            <person name="Raney B.J."/>
            <person name="Rasmussen M.D."/>
            <person name="Robinson J."/>
            <person name="Stark A."/>
            <person name="Vilella A.J."/>
            <person name="Wen J."/>
            <person name="Xie X."/>
            <person name="Zody M.C."/>
            <person name="Baldwin J."/>
            <person name="Bloom T."/>
            <person name="Chin C.W."/>
            <person name="Heiman D."/>
            <person name="Nicol R."/>
            <person name="Nusbaum C."/>
            <person name="Young S."/>
            <person name="Wilkinson J."/>
            <person name="Worley K.C."/>
            <person name="Kovar C.L."/>
            <person name="Muzny D.M."/>
            <person name="Gibbs R.A."/>
            <person name="Cree A."/>
            <person name="Dihn H.H."/>
            <person name="Fowler G."/>
            <person name="Jhangiani S."/>
            <person name="Joshi V."/>
            <person name="Lee S."/>
            <person name="Lewis L.R."/>
            <person name="Nazareth L.V."/>
            <person name="Okwuonu G."/>
            <person name="Santibanez J."/>
            <person name="Warren W.C."/>
            <person name="Mardis E.R."/>
            <person name="Weinstock G.M."/>
            <person name="Wilson R.K."/>
            <person name="Delehaunty K."/>
            <person name="Dooling D."/>
            <person name="Fronik C."/>
            <person name="Fulton L."/>
            <person name="Fulton B."/>
            <person name="Graves T."/>
            <person name="Minx P."/>
            <person name="Sodergren E."/>
            <person name="Birney E."/>
            <person name="Margulies E.H."/>
            <person name="Herrero J."/>
            <person name="Green E.D."/>
            <person name="Haussler D."/>
            <person name="Siepel A."/>
            <person name="Goldman N."/>
            <person name="Pollard K.S."/>
            <person name="Pedersen J.S."/>
            <person name="Lander E.S."/>
            <person name="Kellis M."/>
        </authorList>
    </citation>
    <scope>NUCLEOTIDE SEQUENCE [LARGE SCALE GENOMIC DNA]</scope>
    <source>
        <strain>Thorbecke</strain>
    </source>
</reference>
<reference evidence="20 21" key="2">
    <citation type="journal article" date="2016" name="Cell">
        <title>Decoding mammalian ribosome-mRNA states by translational GTPase complexes.</title>
        <authorList>
            <person name="Shao S."/>
            <person name="Murray J."/>
            <person name="Brown A."/>
            <person name="Taunton J."/>
            <person name="Ramakrishnan V."/>
            <person name="Hegde R.S."/>
        </authorList>
    </citation>
    <scope>STRUCTURE BY ELECTRON MICROSCOPY (3.31 ANGSTROMS) OF RIBOSOME</scope>
    <scope>FUNCTION</scope>
    <scope>SUBCELLULAR LOCATION</scope>
    <scope>SUBUNIT</scope>
</reference>
<reference evidence="18 19" key="3">
    <citation type="journal article" date="2015" name="Nature">
        <title>Structural basis for stop codon recognition in eukaryotes.</title>
        <authorList>
            <person name="Brown A."/>
            <person name="Shao S."/>
            <person name="Murray J."/>
            <person name="Hegde R.S."/>
            <person name="Ramakrishnan V."/>
        </authorList>
    </citation>
    <scope>STRUCTURE BY ELECTRON MICROSCOPY (3.45 ANGSTROMS) OF 44-291 OF RIBOSOME</scope>
    <scope>FUNCTION</scope>
    <scope>SUBCELLULAR LOCATION</scope>
    <scope>SUBUNIT</scope>
</reference>
<reference evidence="22 23" key="4">
    <citation type="journal article" date="2018" name="Elife">
        <title>Dual tRNA mimicry in the Cricket paralysis virus IRES uncovers an unexpected similarity with the Hepatitis C Virus IRES.</title>
        <authorList>
            <person name="Pisareva V.P."/>
            <person name="Pisarev A.V."/>
            <person name="Fernandez I.S."/>
        </authorList>
    </citation>
    <scope>STRUCTURE BY ELECTRON MICROSCOPY (3.20 ANGSTROMS) OF RIBOSOME</scope>
    <scope>SUBCELLULAR LOCATION</scope>
    <scope>SUBUNIT</scope>
</reference>
<reference evidence="25 26" key="5">
    <citation type="journal article" date="2018" name="Elife">
        <title>Structures of translationally inactive mammalian ribosomes.</title>
        <authorList>
            <person name="Brown A."/>
            <person name="Baird M.R."/>
            <person name="Yip M.C."/>
            <person name="Murray J."/>
            <person name="Shao S."/>
        </authorList>
    </citation>
    <scope>STRUCTURE BY ELECTRON MICROSCOPY (3.30 ANGSTROMS) OF 1-107 OF RIBOSOME</scope>
    <scope>SUBCELLULAR LOCATION</scope>
    <scope>SUBUNIT</scope>
</reference>
<reference evidence="24" key="6">
    <citation type="journal article" date="2018" name="Mol. Cell">
        <title>ZNF598 is a quality control sensor of collided ribosomes.</title>
        <authorList>
            <person name="Juszkiewicz S."/>
            <person name="Chandrasekaran V."/>
            <person name="Lin Z."/>
            <person name="Kraatz S."/>
            <person name="Ramakrishnan V."/>
            <person name="Hegde R.S."/>
        </authorList>
    </citation>
    <scope>STRUCTURE BY ELECTRON MICROSCOPY (3.80 ANGSTROMS) OF RIBOSOME</scope>
    <scope>SUBCELLULAR LOCATION</scope>
    <scope>SUBUNIT</scope>
</reference>
<reference evidence="29 30" key="7">
    <citation type="journal article" date="2019" name="Elife">
        <title>Structural and mutational analysis of the ribosome-arresting human XBP1u.</title>
        <authorList>
            <person name="Shanmuganathan V."/>
            <person name="Schiller N."/>
            <person name="Magoulopoulou A."/>
            <person name="Cheng J."/>
            <person name="Braunger K."/>
            <person name="Cymer F."/>
            <person name="Berninghausen O."/>
            <person name="Beatrix B."/>
            <person name="Kohno K."/>
            <person name="von Heijne G."/>
            <person name="Beckmann R."/>
        </authorList>
    </citation>
    <scope>STRUCTURE BY ELECTRON MICROSCOPY (3.00 ANGSTROMS) OF RIBOSOME</scope>
    <scope>SUBCELLULAR LOCATION</scope>
    <scope>SUBUNIT</scope>
</reference>
<reference evidence="27 28" key="8">
    <citation type="journal article" date="2019" name="EMBO J.">
        <title>The Israeli acute paralysis virus IRES captures host ribosomes by mimicking a ribosomal state with hybrid tRNAs.</title>
        <authorList>
            <person name="Acosta-Reyes F."/>
            <person name="Neupane R."/>
            <person name="Frank J."/>
            <person name="Fernandez I.S."/>
        </authorList>
    </citation>
    <scope>STRUCTURE BY ELECTRON MICROSCOPY (3.10 ANGSTROMS) OF RIBOSOME</scope>
    <scope>SUBUNIT</scope>
    <scope>SUBCELLULAR LOCATION</scope>
</reference>
<reference evidence="31" key="9">
    <citation type="journal article" date="2019" name="Nat. Struct. Mol. Biol.">
        <title>Mechanism of ribosome stalling during translation of a poly(A) tail.</title>
        <authorList>
            <person name="Chandrasekaran V."/>
            <person name="Juszkiewicz S."/>
            <person name="Choi J."/>
            <person name="Puglisi J.D."/>
            <person name="Brown A."/>
            <person name="Shao S."/>
            <person name="Ramakrishnan V."/>
            <person name="Hegde R.S."/>
        </authorList>
    </citation>
    <scope>STRUCTURE BY ELECTRON MICROSCOPY (2.80 ANGSTROMS) OF RIBOSOME</scope>
    <scope>SUBCELLULAR LOCATION</scope>
    <scope>SUBUNIT</scope>
</reference>
<reference evidence="32 33" key="10">
    <citation type="journal article" date="2020" name="Cell Rep.">
        <title>The Halastavi arva virus intergenic region IRES promotes translation by the simplest possible initiation mechanism.</title>
        <authorList>
            <person name="Abaeva I.S."/>
            <person name="Vicens Q."/>
            <person name="Bochler A."/>
            <person name="Soufari H."/>
            <person name="Simonetti A."/>
            <person name="Pestova T.V."/>
            <person name="Hashem Y."/>
            <person name="Hellen C.U.T."/>
        </authorList>
    </citation>
    <scope>STRUCTURE BY ELECTRON MICROSCOPY (3.49 ANGSTROMS) OF RIBOSOME</scope>
    <scope>SUBCELLULAR LOCATION</scope>
    <scope>SUBUNIT</scope>
</reference>
<reference evidence="35 36" key="11">
    <citation type="journal article" date="2022" name="Mol. Cell">
        <title>Direct epitranscriptomic regulation of mammalian translation initiation through N4-acetylcytidine.</title>
        <authorList>
            <person name="Arango D."/>
            <person name="Sturgill D."/>
            <person name="Yang R."/>
            <person name="Kanai T."/>
            <person name="Bauer P."/>
            <person name="Roy J."/>
            <person name="Wang Z."/>
            <person name="Hosogane M."/>
            <person name="Schiffers S."/>
            <person name="Oberdoerffer S."/>
        </authorList>
    </citation>
    <scope>STRUCTURE BY ELECTRON MICROSCOPY (2.80 ANGSTROMS) OF RIBOSOME</scope>
    <scope>SUBCELLULAR LOCATION</scope>
    <scope>SUBUNIT</scope>
</reference>
<reference evidence="37 38" key="12">
    <citation type="journal article" date="2022" name="Science">
        <title>Structure of the mammalian ribosome as it decodes the selenocysteine UGA codon.</title>
        <authorList>
            <person name="Hilal T."/>
            <person name="Killam B.Y."/>
            <person name="Grozdanovic M."/>
            <person name="Dobosz-Bartoszek M."/>
            <person name="Loerke J."/>
            <person name="Buerger J."/>
            <person name="Mielke T."/>
            <person name="Copeland P.R."/>
            <person name="Simonovic M."/>
            <person name="Spahn C.M.T."/>
        </authorList>
    </citation>
    <scope>STRUCTURE BY ELECTRON MICROSCOPY (2.80 ANGSTROMS) OF RIBOSOME</scope>
    <scope>SUBCELLULAR LOCATION</scope>
    <scope>SUBUNIT</scope>
</reference>
<reference evidence="34" key="13">
    <citation type="journal article" date="2023" name="Nature">
        <title>A molecular network of conserved factors keeps ribosomes dormant in the egg.</title>
        <authorList>
            <person name="Leesch F."/>
            <person name="Lorenzo-Orts L."/>
            <person name="Pribitzer C."/>
            <person name="Grishkovskaya I."/>
            <person name="Roehsner J."/>
            <person name="Chugunova A."/>
            <person name="Matzinger M."/>
            <person name="Roitinger E."/>
            <person name="Belacic K."/>
            <person name="Kandolf S."/>
            <person name="Lin T.Y."/>
            <person name="Mechtler K."/>
            <person name="Meinhart A."/>
            <person name="Haselbach D."/>
            <person name="Pauli A."/>
        </authorList>
    </citation>
    <scope>STRUCTURE BY ELECTRON MICROSCOPY (2.30 ANGSTROMS) OF RIBOSOME</scope>
    <scope>SUBCELLULAR LOCATION</scope>
    <scope>SUBUNIT</scope>
</reference>
<feature type="chain" id="PRO_0000460095" description="Large ribosomal subunit protein eL6">
    <location>
        <begin position="1"/>
        <end position="291"/>
    </location>
</feature>
<feature type="region of interest" description="Disordered" evidence="4">
    <location>
        <begin position="1"/>
        <end position="51"/>
    </location>
</feature>
<feature type="compositionally biased region" description="Low complexity" evidence="4">
    <location>
        <begin position="1"/>
        <end position="11"/>
    </location>
</feature>
<feature type="compositionally biased region" description="Basic and acidic residues" evidence="4">
    <location>
        <begin position="12"/>
        <end position="26"/>
    </location>
</feature>
<feature type="compositionally biased region" description="Basic residues" evidence="4">
    <location>
        <begin position="27"/>
        <end position="46"/>
    </location>
</feature>
<feature type="modified residue" description="N6-succinyllysine" evidence="1">
    <location>
        <position position="97"/>
    </location>
</feature>
<feature type="modified residue" description="Phosphoserine" evidence="2">
    <location>
        <position position="130"/>
    </location>
</feature>
<feature type="modified residue" description="N6-succinyllysine" evidence="1">
    <location>
        <position position="210"/>
    </location>
</feature>
<feature type="modified residue" description="N6-acetyllysine" evidence="2">
    <location>
        <position position="242"/>
    </location>
</feature>
<feature type="cross-link" description="Glycyl lysine isopeptide (Lys-Gly) (interchain with G-Cter in SUMO2)" evidence="2">
    <location>
        <position position="5"/>
    </location>
</feature>
<keyword id="KW-0002">3D-structure</keyword>
<keyword id="KW-0007">Acetylation</keyword>
<keyword id="KW-0963">Cytoplasm</keyword>
<keyword id="KW-0256">Endoplasmic reticulum</keyword>
<keyword id="KW-1017">Isopeptide bond</keyword>
<keyword id="KW-0597">Phosphoprotein</keyword>
<keyword id="KW-1185">Reference proteome</keyword>
<keyword id="KW-0687">Ribonucleoprotein</keyword>
<keyword id="KW-0689">Ribosomal protein</keyword>
<keyword id="KW-0832">Ubl conjugation</keyword>
<comment type="function">
    <text evidence="5 6">Component of the large ribosomal subunit (PubMed:26245381, PubMed:27863242). The ribosome is a large ribonucleoprotein complex responsible for the synthesis of proteins in the cell (PubMed:26245381, PubMed:27863242).</text>
</comment>
<comment type="subunit">
    <text evidence="1 2 5 6 7 8 9 10 11 12 13 14 15 16">Component of the large ribosomal subunit (PubMed:26245381, PubMed:27863242, PubMed:29856316, PubMed:30293783, PubMed:30355441, PubMed:31246176, PubMed:31609474, PubMed:31768042, PubMed:33296660, PubMed:35679869, PubMed:35709277, PubMed:36653451). May bind IPO9 with low affinity (By similarity).</text>
</comment>
<comment type="subcellular location">
    <subcellularLocation>
        <location evidence="2">Cytoplasm</location>
        <location evidence="2">Cytosol</location>
    </subcellularLocation>
    <subcellularLocation>
        <location evidence="5 6 7 8 9 10 11 12 13 14 15 16">Cytoplasm</location>
    </subcellularLocation>
    <subcellularLocation>
        <location evidence="3">Rough endoplasmic reticulum</location>
    </subcellularLocation>
    <text evidence="2 3">Detected on cytosolic polysomes (By similarity). Detected in ribosomes that are associated with the rough endoplasmic reticulum (By similarity).</text>
</comment>
<comment type="similarity">
    <text evidence="17">Belongs to the eukaryotic ribosomal protein eL6 family.</text>
</comment>